<name>TYSY_THISH</name>
<gene>
    <name evidence="1" type="primary">thyA</name>
    <name type="ordered locus">Tgr7_2747</name>
</gene>
<keyword id="KW-0963">Cytoplasm</keyword>
<keyword id="KW-0489">Methyltransferase</keyword>
<keyword id="KW-0545">Nucleotide biosynthesis</keyword>
<keyword id="KW-1185">Reference proteome</keyword>
<keyword id="KW-0808">Transferase</keyword>
<reference key="1">
    <citation type="journal article" date="2011" name="Stand. Genomic Sci.">
        <title>Complete genome sequence of 'Thioalkalivibrio sulfidophilus' HL-EbGr7.</title>
        <authorList>
            <person name="Muyzer G."/>
            <person name="Sorokin D.Y."/>
            <person name="Mavromatis K."/>
            <person name="Lapidus A."/>
            <person name="Clum A."/>
            <person name="Ivanova N."/>
            <person name="Pati A."/>
            <person name="d'Haeseleer P."/>
            <person name="Woyke T."/>
            <person name="Kyrpides N.C."/>
        </authorList>
    </citation>
    <scope>NUCLEOTIDE SEQUENCE [LARGE SCALE GENOMIC DNA]</scope>
    <source>
        <strain>HL-EbGR7</strain>
    </source>
</reference>
<feature type="chain" id="PRO_1000197266" description="Thymidylate synthase">
    <location>
        <begin position="1"/>
        <end position="277"/>
    </location>
</feature>
<feature type="active site" description="Nucleophile" evidence="1">
    <location>
        <position position="159"/>
    </location>
</feature>
<feature type="binding site" description="in other chain" evidence="1">
    <location>
        <position position="21"/>
    </location>
    <ligand>
        <name>dUMP</name>
        <dbReference type="ChEBI" id="CHEBI:246422"/>
        <note>ligand shared between dimeric partners</note>
    </ligand>
</feature>
<feature type="binding site" evidence="1">
    <location>
        <position position="51"/>
    </location>
    <ligand>
        <name>(6R)-5,10-methylene-5,6,7,8-tetrahydrofolate</name>
        <dbReference type="ChEBI" id="CHEBI:15636"/>
    </ligand>
</feature>
<feature type="binding site" evidence="1">
    <location>
        <begin position="126"/>
        <end position="127"/>
    </location>
    <ligand>
        <name>dUMP</name>
        <dbReference type="ChEBI" id="CHEBI:246422"/>
        <note>ligand shared between dimeric partners</note>
    </ligand>
</feature>
<feature type="binding site" description="in other chain" evidence="1">
    <location>
        <begin position="179"/>
        <end position="182"/>
    </location>
    <ligand>
        <name>dUMP</name>
        <dbReference type="ChEBI" id="CHEBI:246422"/>
        <note>ligand shared between dimeric partners</note>
    </ligand>
</feature>
<feature type="binding site" evidence="1">
    <location>
        <position position="182"/>
    </location>
    <ligand>
        <name>(6R)-5,10-methylene-5,6,7,8-tetrahydrofolate</name>
        <dbReference type="ChEBI" id="CHEBI:15636"/>
    </ligand>
</feature>
<feature type="binding site" description="in other chain" evidence="1">
    <location>
        <position position="190"/>
    </location>
    <ligand>
        <name>dUMP</name>
        <dbReference type="ChEBI" id="CHEBI:246422"/>
        <note>ligand shared between dimeric partners</note>
    </ligand>
</feature>
<feature type="binding site" description="in other chain" evidence="1">
    <location>
        <begin position="220"/>
        <end position="222"/>
    </location>
    <ligand>
        <name>dUMP</name>
        <dbReference type="ChEBI" id="CHEBI:246422"/>
        <note>ligand shared between dimeric partners</note>
    </ligand>
</feature>
<feature type="binding site" evidence="1">
    <location>
        <position position="276"/>
    </location>
    <ligand>
        <name>(6R)-5,10-methylene-5,6,7,8-tetrahydrofolate</name>
        <dbReference type="ChEBI" id="CHEBI:15636"/>
    </ligand>
</feature>
<organism>
    <name type="scientific">Thioalkalivibrio sulfidiphilus (strain HL-EbGR7)</name>
    <dbReference type="NCBI Taxonomy" id="396588"/>
    <lineage>
        <taxon>Bacteria</taxon>
        <taxon>Pseudomonadati</taxon>
        <taxon>Pseudomonadota</taxon>
        <taxon>Gammaproteobacteria</taxon>
        <taxon>Chromatiales</taxon>
        <taxon>Ectothiorhodospiraceae</taxon>
        <taxon>Thioalkalivibrio</taxon>
    </lineage>
</organism>
<comment type="function">
    <text evidence="1">Catalyzes the reductive methylation of 2'-deoxyuridine-5'-monophosphate (dUMP) to 2'-deoxythymidine-5'-monophosphate (dTMP) while utilizing 5,10-methylenetetrahydrofolate (mTHF) as the methyl donor and reductant in the reaction, yielding dihydrofolate (DHF) as a by-product. This enzymatic reaction provides an intracellular de novo source of dTMP, an essential precursor for DNA biosynthesis.</text>
</comment>
<comment type="catalytic activity">
    <reaction evidence="1">
        <text>dUMP + (6R)-5,10-methylene-5,6,7,8-tetrahydrofolate = 7,8-dihydrofolate + dTMP</text>
        <dbReference type="Rhea" id="RHEA:12104"/>
        <dbReference type="ChEBI" id="CHEBI:15636"/>
        <dbReference type="ChEBI" id="CHEBI:57451"/>
        <dbReference type="ChEBI" id="CHEBI:63528"/>
        <dbReference type="ChEBI" id="CHEBI:246422"/>
        <dbReference type="EC" id="2.1.1.45"/>
    </reaction>
</comment>
<comment type="pathway">
    <text evidence="1">Pyrimidine metabolism; dTTP biosynthesis.</text>
</comment>
<comment type="subunit">
    <text evidence="1">Homodimer.</text>
</comment>
<comment type="subcellular location">
    <subcellularLocation>
        <location evidence="1">Cytoplasm</location>
    </subcellularLocation>
</comment>
<comment type="similarity">
    <text evidence="1">Belongs to the thymidylate synthase family. Bacterial-type ThyA subfamily.</text>
</comment>
<protein>
    <recommendedName>
        <fullName evidence="1">Thymidylate synthase</fullName>
        <shortName evidence="1">TS</shortName>
        <shortName evidence="1">TSase</shortName>
        <ecNumber evidence="1">2.1.1.45</ecNumber>
    </recommendedName>
</protein>
<dbReference type="EC" id="2.1.1.45" evidence="1"/>
<dbReference type="EMBL" id="CP001339">
    <property type="protein sequence ID" value="ACL73821.1"/>
    <property type="molecule type" value="Genomic_DNA"/>
</dbReference>
<dbReference type="RefSeq" id="WP_012639296.1">
    <property type="nucleotide sequence ID" value="NC_011901.1"/>
</dbReference>
<dbReference type="SMR" id="B8GN06"/>
<dbReference type="STRING" id="396588.Tgr7_2747"/>
<dbReference type="KEGG" id="tgr:Tgr7_2747"/>
<dbReference type="eggNOG" id="COG0207">
    <property type="taxonomic scope" value="Bacteria"/>
</dbReference>
<dbReference type="HOGENOM" id="CLU_021669_0_0_6"/>
<dbReference type="OrthoDB" id="9774633at2"/>
<dbReference type="UniPathway" id="UPA00575"/>
<dbReference type="Proteomes" id="UP000002383">
    <property type="component" value="Chromosome"/>
</dbReference>
<dbReference type="GO" id="GO:0005829">
    <property type="term" value="C:cytosol"/>
    <property type="evidence" value="ECO:0007669"/>
    <property type="project" value="TreeGrafter"/>
</dbReference>
<dbReference type="GO" id="GO:0004799">
    <property type="term" value="F:thymidylate synthase activity"/>
    <property type="evidence" value="ECO:0007669"/>
    <property type="project" value="UniProtKB-UniRule"/>
</dbReference>
<dbReference type="GO" id="GO:0006231">
    <property type="term" value="P:dTMP biosynthetic process"/>
    <property type="evidence" value="ECO:0007669"/>
    <property type="project" value="UniProtKB-UniRule"/>
</dbReference>
<dbReference type="GO" id="GO:0006235">
    <property type="term" value="P:dTTP biosynthetic process"/>
    <property type="evidence" value="ECO:0007669"/>
    <property type="project" value="UniProtKB-UniRule"/>
</dbReference>
<dbReference type="GO" id="GO:0032259">
    <property type="term" value="P:methylation"/>
    <property type="evidence" value="ECO:0007669"/>
    <property type="project" value="UniProtKB-KW"/>
</dbReference>
<dbReference type="CDD" id="cd00351">
    <property type="entry name" value="TS_Pyrimidine_HMase"/>
    <property type="match status" value="1"/>
</dbReference>
<dbReference type="FunFam" id="3.30.572.10:FF:000001">
    <property type="entry name" value="Thymidylate synthase"/>
    <property type="match status" value="1"/>
</dbReference>
<dbReference type="Gene3D" id="3.30.572.10">
    <property type="entry name" value="Thymidylate synthase/dCMP hydroxymethylase domain"/>
    <property type="match status" value="1"/>
</dbReference>
<dbReference type="HAMAP" id="MF_00008">
    <property type="entry name" value="Thymidy_synth_bact"/>
    <property type="match status" value="1"/>
</dbReference>
<dbReference type="InterPro" id="IPR045097">
    <property type="entry name" value="Thymidate_synth/dCMP_Mease"/>
</dbReference>
<dbReference type="InterPro" id="IPR023451">
    <property type="entry name" value="Thymidate_synth/dCMP_Mease_dom"/>
</dbReference>
<dbReference type="InterPro" id="IPR036926">
    <property type="entry name" value="Thymidate_synth/dCMP_Mease_sf"/>
</dbReference>
<dbReference type="InterPro" id="IPR000398">
    <property type="entry name" value="Thymidylate_synthase"/>
</dbReference>
<dbReference type="NCBIfam" id="NF002497">
    <property type="entry name" value="PRK01827.1-3"/>
    <property type="match status" value="1"/>
</dbReference>
<dbReference type="NCBIfam" id="NF002499">
    <property type="entry name" value="PRK01827.1-5"/>
    <property type="match status" value="1"/>
</dbReference>
<dbReference type="NCBIfam" id="TIGR03284">
    <property type="entry name" value="thym_sym"/>
    <property type="match status" value="2"/>
</dbReference>
<dbReference type="PANTHER" id="PTHR11548:SF9">
    <property type="entry name" value="THYMIDYLATE SYNTHASE"/>
    <property type="match status" value="1"/>
</dbReference>
<dbReference type="PANTHER" id="PTHR11548">
    <property type="entry name" value="THYMIDYLATE SYNTHASE 1"/>
    <property type="match status" value="1"/>
</dbReference>
<dbReference type="Pfam" id="PF00303">
    <property type="entry name" value="Thymidylat_synt"/>
    <property type="match status" value="1"/>
</dbReference>
<dbReference type="PRINTS" id="PR00108">
    <property type="entry name" value="THYMDSNTHASE"/>
</dbReference>
<dbReference type="SUPFAM" id="SSF55831">
    <property type="entry name" value="Thymidylate synthase/dCMP hydroxymethylase"/>
    <property type="match status" value="1"/>
</dbReference>
<sequence length="277" mass="31776">MQPYLDLMRQLLEHGTVKSDRTGTGTRSLFGHQMRFDLSKGFPLVTTKKLHLKSIIHELLWFLKGETNIAYLKDNGVRIWDEWATEDGELGPVYGRQWRAWPTPDGRHIDQISQVVEQIRTRPDSRRLIVSAWNVAELPDEGISPKDNARAGRMALAPCHTFFQFYVADGRLSCQLYQRSADVFLGVPFNIASYALLTLMVAQVTDLEPGDFVHTFGDVHLYSNHVEQAKEQLSREPYPLPKMHLNPEVKSLFDFRYEDFTLEGYQAHPHIKAPVAI</sequence>
<evidence type="ECO:0000255" key="1">
    <source>
        <dbReference type="HAMAP-Rule" id="MF_00008"/>
    </source>
</evidence>
<proteinExistence type="inferred from homology"/>
<accession>B8GN06</accession>